<feature type="chain" id="PRO_0000268880" description="Regulator of sigma D">
    <location>
        <begin position="1"/>
        <end position="153"/>
    </location>
</feature>
<accession>Q6DAL9</accession>
<keyword id="KW-0963">Cytoplasm</keyword>
<keyword id="KW-1185">Reference proteome</keyword>
<keyword id="KW-0804">Transcription</keyword>
<keyword id="KW-0805">Transcription regulation</keyword>
<dbReference type="EMBL" id="BX950851">
    <property type="protein sequence ID" value="CAG73153.1"/>
    <property type="molecule type" value="Genomic_DNA"/>
</dbReference>
<dbReference type="RefSeq" id="WP_011091871.1">
    <property type="nucleotide sequence ID" value="NC_004547.2"/>
</dbReference>
<dbReference type="SMR" id="Q6DAL9"/>
<dbReference type="STRING" id="218491.ECA0233"/>
<dbReference type="GeneID" id="57207100"/>
<dbReference type="KEGG" id="eca:ECA0233"/>
<dbReference type="PATRIC" id="fig|218491.5.peg.235"/>
<dbReference type="eggNOG" id="COG3160">
    <property type="taxonomic scope" value="Bacteria"/>
</dbReference>
<dbReference type="HOGENOM" id="CLU_142729_0_0_6"/>
<dbReference type="OrthoDB" id="5567237at2"/>
<dbReference type="Proteomes" id="UP000007966">
    <property type="component" value="Chromosome"/>
</dbReference>
<dbReference type="GO" id="GO:0005737">
    <property type="term" value="C:cytoplasm"/>
    <property type="evidence" value="ECO:0007669"/>
    <property type="project" value="UniProtKB-SubCell"/>
</dbReference>
<dbReference type="GO" id="GO:0006355">
    <property type="term" value="P:regulation of DNA-templated transcription"/>
    <property type="evidence" value="ECO:0007669"/>
    <property type="project" value="InterPro"/>
</dbReference>
<dbReference type="Gene3D" id="1.20.120.1370">
    <property type="entry name" value="Regulator of RNA polymerase sigma(70) subunit, domain 4"/>
    <property type="match status" value="1"/>
</dbReference>
<dbReference type="HAMAP" id="MF_01181">
    <property type="entry name" value="Rsd"/>
    <property type="match status" value="1"/>
</dbReference>
<dbReference type="InterPro" id="IPR038309">
    <property type="entry name" value="Rsd/AlgQ_sf"/>
</dbReference>
<dbReference type="InterPro" id="IPR023785">
    <property type="entry name" value="Sigma70_reg_Rsd"/>
</dbReference>
<dbReference type="InterPro" id="IPR007448">
    <property type="entry name" value="Sigma70_reg_Rsd_AlgQ"/>
</dbReference>
<dbReference type="NCBIfam" id="NF008723">
    <property type="entry name" value="PRK11718.1"/>
    <property type="match status" value="1"/>
</dbReference>
<dbReference type="Pfam" id="PF04353">
    <property type="entry name" value="Rsd_AlgQ"/>
    <property type="match status" value="1"/>
</dbReference>
<dbReference type="PIRSF" id="PIRSF016548">
    <property type="entry name" value="Rsd_AlgQ"/>
    <property type="match status" value="1"/>
</dbReference>
<comment type="function">
    <text evidence="1">Binds RpoD and negatively regulates RpoD-mediated transcription activation by preventing the interaction between the primary sigma factor RpoD with the catalytic core of the RNA polymerase and with promoter DNA. May be involved in replacement of the RNA polymerase sigma subunit from RpoD to RpoS during the transition from exponential growth to the stationary phase.</text>
</comment>
<comment type="subunit">
    <text evidence="1">Interacts with RpoD.</text>
</comment>
<comment type="subcellular location">
    <subcellularLocation>
        <location evidence="1">Cytoplasm</location>
    </subcellularLocation>
</comment>
<comment type="similarity">
    <text evidence="1">Belongs to the Rsd/AlgQ family.</text>
</comment>
<organism>
    <name type="scientific">Pectobacterium atrosepticum (strain SCRI 1043 / ATCC BAA-672)</name>
    <name type="common">Erwinia carotovora subsp. atroseptica</name>
    <dbReference type="NCBI Taxonomy" id="218491"/>
    <lineage>
        <taxon>Bacteria</taxon>
        <taxon>Pseudomonadati</taxon>
        <taxon>Pseudomonadota</taxon>
        <taxon>Gammaproteobacteria</taxon>
        <taxon>Enterobacterales</taxon>
        <taxon>Pectobacteriaceae</taxon>
        <taxon>Pectobacterium</taxon>
    </lineage>
</organism>
<sequence>MLNQLQSLTEYVGGNNALIDQWLQARKQLLVAYYHLVGIKPNKEALSLLDEEALDNFCQNLVDYLSTGHFHLYEKMLHEAATHSEQVLALSTQLDFALQNNTQQIMTFYDSHLAAAIDHDNCIEFQQALSSVGEALEERFTLEDNMIKQVYDN</sequence>
<gene>
    <name evidence="1" type="primary">rsd</name>
    <name type="ordered locus">ECA0233</name>
</gene>
<name>RSD_PECAS</name>
<evidence type="ECO:0000255" key="1">
    <source>
        <dbReference type="HAMAP-Rule" id="MF_01181"/>
    </source>
</evidence>
<reference key="1">
    <citation type="journal article" date="2004" name="Proc. Natl. Acad. Sci. U.S.A.">
        <title>Genome sequence of the enterobacterial phytopathogen Erwinia carotovora subsp. atroseptica and characterization of virulence factors.</title>
        <authorList>
            <person name="Bell K.S."/>
            <person name="Sebaihia M."/>
            <person name="Pritchard L."/>
            <person name="Holden M.T.G."/>
            <person name="Hyman L.J."/>
            <person name="Holeva M.C."/>
            <person name="Thomson N.R."/>
            <person name="Bentley S.D."/>
            <person name="Churcher L.J.C."/>
            <person name="Mungall K."/>
            <person name="Atkin R."/>
            <person name="Bason N."/>
            <person name="Brooks K."/>
            <person name="Chillingworth T."/>
            <person name="Clark K."/>
            <person name="Doggett J."/>
            <person name="Fraser A."/>
            <person name="Hance Z."/>
            <person name="Hauser H."/>
            <person name="Jagels K."/>
            <person name="Moule S."/>
            <person name="Norbertczak H."/>
            <person name="Ormond D."/>
            <person name="Price C."/>
            <person name="Quail M.A."/>
            <person name="Sanders M."/>
            <person name="Walker D."/>
            <person name="Whitehead S."/>
            <person name="Salmond G.P.C."/>
            <person name="Birch P.R.J."/>
            <person name="Parkhill J."/>
            <person name="Toth I.K."/>
        </authorList>
    </citation>
    <scope>NUCLEOTIDE SEQUENCE [LARGE SCALE GENOMIC DNA]</scope>
    <source>
        <strain>SCRI 1043 / ATCC BAA-672</strain>
    </source>
</reference>
<protein>
    <recommendedName>
        <fullName evidence="1">Regulator of sigma D</fullName>
    </recommendedName>
</protein>
<proteinExistence type="inferred from homology"/>